<accession>Q44344</accession>
<keyword id="KW-0975">Bacterial flagellum</keyword>
<keyword id="KW-1005">Bacterial flagellum biogenesis</keyword>
<keyword id="KW-1006">Bacterial flagellum protein export</keyword>
<keyword id="KW-1003">Cell membrane</keyword>
<keyword id="KW-0472">Membrane</keyword>
<keyword id="KW-0653">Protein transport</keyword>
<keyword id="KW-1185">Reference proteome</keyword>
<keyword id="KW-0812">Transmembrane</keyword>
<keyword id="KW-1133">Transmembrane helix</keyword>
<keyword id="KW-0813">Transport</keyword>
<comment type="function">
    <text evidence="1">Plays a role in the flagellum-specific transport system.</text>
</comment>
<comment type="subcellular location">
    <subcellularLocation>
        <location evidence="3">Cell membrane</location>
        <topology evidence="3">Multi-pass membrane protein</topology>
    </subcellularLocation>
    <subcellularLocation>
        <location evidence="1">Bacterial flagellum basal body</location>
    </subcellularLocation>
</comment>
<comment type="similarity">
    <text evidence="3">Belongs to the FliP/MopC/SpaP family.</text>
</comment>
<organism>
    <name type="scientific">Agrobacterium fabrum (strain C58 / ATCC 33970)</name>
    <name type="common">Agrobacterium tumefaciens (strain C58)</name>
    <dbReference type="NCBI Taxonomy" id="176299"/>
    <lineage>
        <taxon>Bacteria</taxon>
        <taxon>Pseudomonadati</taxon>
        <taxon>Pseudomonadota</taxon>
        <taxon>Alphaproteobacteria</taxon>
        <taxon>Hyphomicrobiales</taxon>
        <taxon>Rhizobiaceae</taxon>
        <taxon>Rhizobium/Agrobacterium group</taxon>
        <taxon>Agrobacterium</taxon>
        <taxon>Agrobacterium tumefaciens complex</taxon>
    </lineage>
</organism>
<protein>
    <recommendedName>
        <fullName>Flagellar biosynthetic protein FliP</fullName>
    </recommendedName>
</protein>
<dbReference type="EMBL" id="U39941">
    <property type="protein sequence ID" value="AAB68974.1"/>
    <property type="molecule type" value="Genomic_DNA"/>
</dbReference>
<dbReference type="EMBL" id="U95165">
    <property type="protein sequence ID" value="AAB71796.1"/>
    <property type="molecule type" value="Genomic_DNA"/>
</dbReference>
<dbReference type="EMBL" id="AE007869">
    <property type="protein sequence ID" value="AAK86358.1"/>
    <property type="molecule type" value="Genomic_DNA"/>
</dbReference>
<dbReference type="PIR" id="AE2643">
    <property type="entry name" value="AE2643"/>
</dbReference>
<dbReference type="PIR" id="E97425">
    <property type="entry name" value="E97425"/>
</dbReference>
<dbReference type="RefSeq" id="NP_353573.1">
    <property type="nucleotide sequence ID" value="NC_003062.2"/>
</dbReference>
<dbReference type="RefSeq" id="WP_006313008.1">
    <property type="nucleotide sequence ID" value="NC_003062.2"/>
</dbReference>
<dbReference type="SMR" id="Q44344"/>
<dbReference type="STRING" id="176299.Atu0546"/>
<dbReference type="EnsemblBacteria" id="AAK86358">
    <property type="protein sequence ID" value="AAK86358"/>
    <property type="gene ID" value="Atu0546"/>
</dbReference>
<dbReference type="GeneID" id="1132584"/>
<dbReference type="KEGG" id="atu:Atu0546"/>
<dbReference type="PATRIC" id="fig|176299.10.peg.542"/>
<dbReference type="eggNOG" id="COG1338">
    <property type="taxonomic scope" value="Bacteria"/>
</dbReference>
<dbReference type="HOGENOM" id="CLU_042028_0_0_5"/>
<dbReference type="OrthoDB" id="9805111at2"/>
<dbReference type="PhylomeDB" id="Q44344"/>
<dbReference type="BioCyc" id="AGRO:ATU0546-MONOMER"/>
<dbReference type="Proteomes" id="UP000000813">
    <property type="component" value="Chromosome circular"/>
</dbReference>
<dbReference type="GO" id="GO:0009425">
    <property type="term" value="C:bacterial-type flagellum basal body"/>
    <property type="evidence" value="ECO:0007669"/>
    <property type="project" value="UniProtKB-SubCell"/>
</dbReference>
<dbReference type="GO" id="GO:0005886">
    <property type="term" value="C:plasma membrane"/>
    <property type="evidence" value="ECO:0007669"/>
    <property type="project" value="UniProtKB-SubCell"/>
</dbReference>
<dbReference type="GO" id="GO:0044781">
    <property type="term" value="P:bacterial-type flagellum organization"/>
    <property type="evidence" value="ECO:0007669"/>
    <property type="project" value="UniProtKB-KW"/>
</dbReference>
<dbReference type="GO" id="GO:0009306">
    <property type="term" value="P:protein secretion"/>
    <property type="evidence" value="ECO:0007669"/>
    <property type="project" value="InterPro"/>
</dbReference>
<dbReference type="InterPro" id="IPR005837">
    <property type="entry name" value="FliP"/>
</dbReference>
<dbReference type="InterPro" id="IPR005838">
    <property type="entry name" value="T3SS_IM_P"/>
</dbReference>
<dbReference type="NCBIfam" id="TIGR01103">
    <property type="entry name" value="fliP"/>
    <property type="match status" value="1"/>
</dbReference>
<dbReference type="NCBIfam" id="NF009438">
    <property type="entry name" value="PRK12797.1"/>
    <property type="match status" value="1"/>
</dbReference>
<dbReference type="PANTHER" id="PTHR30587">
    <property type="entry name" value="FLAGELLAR BIOSYNTHETIC PROTEIN FLIP"/>
    <property type="match status" value="1"/>
</dbReference>
<dbReference type="PANTHER" id="PTHR30587:SF0">
    <property type="entry name" value="FLAGELLAR BIOSYNTHETIC PROTEIN FLIP"/>
    <property type="match status" value="1"/>
</dbReference>
<dbReference type="Pfam" id="PF00813">
    <property type="entry name" value="FliP"/>
    <property type="match status" value="1"/>
</dbReference>
<dbReference type="PRINTS" id="PR00951">
    <property type="entry name" value="FLGBIOSNFLIP"/>
</dbReference>
<dbReference type="PRINTS" id="PR01302">
    <property type="entry name" value="TYPE3IMPPROT"/>
</dbReference>
<dbReference type="PROSITE" id="PS01060">
    <property type="entry name" value="FLIP_1"/>
    <property type="match status" value="1"/>
</dbReference>
<dbReference type="PROSITE" id="PS01061">
    <property type="entry name" value="FLIP_2"/>
    <property type="match status" value="1"/>
</dbReference>
<reference key="1">
    <citation type="journal article" date="1997" name="Gene">
        <title>Isolation and characterisation of a linked cluster of genes from Agrobacterium tumefaciens encoding proteins involved in flagellar basal-body structure.</title>
        <authorList>
            <person name="Deakin W.J."/>
            <person name="Furniss C.S."/>
            <person name="Parker V.E."/>
            <person name="Shaw C.H."/>
        </authorList>
    </citation>
    <scope>NUCLEOTIDE SEQUENCE [GENOMIC DNA]</scope>
</reference>
<reference key="2">
    <citation type="journal article" date="2001" name="Science">
        <title>The genome of the natural genetic engineer Agrobacterium tumefaciens C58.</title>
        <authorList>
            <person name="Wood D.W."/>
            <person name="Setubal J.C."/>
            <person name="Kaul R."/>
            <person name="Monks D.E."/>
            <person name="Kitajima J.P."/>
            <person name="Okura V.K."/>
            <person name="Zhou Y."/>
            <person name="Chen L."/>
            <person name="Wood G.E."/>
            <person name="Almeida N.F. Jr."/>
            <person name="Woo L."/>
            <person name="Chen Y."/>
            <person name="Paulsen I.T."/>
            <person name="Eisen J.A."/>
            <person name="Karp P.D."/>
            <person name="Bovee D. Sr."/>
            <person name="Chapman P."/>
            <person name="Clendenning J."/>
            <person name="Deatherage G."/>
            <person name="Gillet W."/>
            <person name="Grant C."/>
            <person name="Kutyavin T."/>
            <person name="Levy R."/>
            <person name="Li M.-J."/>
            <person name="McClelland E."/>
            <person name="Palmieri A."/>
            <person name="Raymond C."/>
            <person name="Rouse G."/>
            <person name="Saenphimmachak C."/>
            <person name="Wu Z."/>
            <person name="Romero P."/>
            <person name="Gordon D."/>
            <person name="Zhang S."/>
            <person name="Yoo H."/>
            <person name="Tao Y."/>
            <person name="Biddle P."/>
            <person name="Jung M."/>
            <person name="Krespan W."/>
            <person name="Perry M."/>
            <person name="Gordon-Kamm B."/>
            <person name="Liao L."/>
            <person name="Kim S."/>
            <person name="Hendrick C."/>
            <person name="Zhao Z.-Y."/>
            <person name="Dolan M."/>
            <person name="Chumley F."/>
            <person name="Tingey S.V."/>
            <person name="Tomb J.-F."/>
            <person name="Gordon M.P."/>
            <person name="Olson M.V."/>
            <person name="Nester E.W."/>
        </authorList>
    </citation>
    <scope>NUCLEOTIDE SEQUENCE [LARGE SCALE GENOMIC DNA]</scope>
    <source>
        <strain>C58 / ATCC 33970</strain>
    </source>
</reference>
<reference key="3">
    <citation type="journal article" date="2001" name="Science">
        <title>Genome sequence of the plant pathogen and biotechnology agent Agrobacterium tumefaciens C58.</title>
        <authorList>
            <person name="Goodner B."/>
            <person name="Hinkle G."/>
            <person name="Gattung S."/>
            <person name="Miller N."/>
            <person name="Blanchard M."/>
            <person name="Qurollo B."/>
            <person name="Goldman B.S."/>
            <person name="Cao Y."/>
            <person name="Askenazi M."/>
            <person name="Halling C."/>
            <person name="Mullin L."/>
            <person name="Houmiel K."/>
            <person name="Gordon J."/>
            <person name="Vaudin M."/>
            <person name="Iartchouk O."/>
            <person name="Epp A."/>
            <person name="Liu F."/>
            <person name="Wollam C."/>
            <person name="Allinger M."/>
            <person name="Doughty D."/>
            <person name="Scott C."/>
            <person name="Lappas C."/>
            <person name="Markelz B."/>
            <person name="Flanagan C."/>
            <person name="Crowell C."/>
            <person name="Gurson J."/>
            <person name="Lomo C."/>
            <person name="Sear C."/>
            <person name="Strub G."/>
            <person name="Cielo C."/>
            <person name="Slater S."/>
        </authorList>
    </citation>
    <scope>NUCLEOTIDE SEQUENCE [LARGE SCALE GENOMIC DNA]</scope>
    <source>
        <strain>C58 / ATCC 33970</strain>
    </source>
</reference>
<sequence>MIRFLVTIAVLLALPGLANAQQFPSDLFNTQIDGSVAAWIIRTFGLLTVLSVAPGILIMVTSFPRFVIAFSILRSGMGLASTPSNMILLSMAMFMTFYVMSPTFDKAWTDGVQPLLQNQINEQQAVQRIAEPFRTFMNANTRDKDLKLFVDIARERGQVVMTDNVVDYRVLVPAFMLSEIRRGFEIGFLIILPFLVIDLIVATITMAMGMMMLPPTSISLPFKILFFVLIDGWNLLVGSLVRSFN</sequence>
<evidence type="ECO:0000250" key="1"/>
<evidence type="ECO:0000255" key="2"/>
<evidence type="ECO:0000305" key="3"/>
<gene>
    <name type="primary">fliP</name>
    <name type="ordered locus">Atu0546</name>
    <name type="ORF">AGR_C_963</name>
</gene>
<name>FLIP_AGRFC</name>
<feature type="chain" id="PRO_0000191977" description="Flagellar biosynthetic protein FliP">
    <location>
        <begin position="1"/>
        <end position="245"/>
    </location>
</feature>
<feature type="transmembrane region" description="Helical" evidence="2">
    <location>
        <begin position="4"/>
        <end position="24"/>
    </location>
</feature>
<feature type="transmembrane region" description="Helical" evidence="2">
    <location>
        <begin position="44"/>
        <end position="64"/>
    </location>
</feature>
<feature type="transmembrane region" description="Helical" evidence="2">
    <location>
        <begin position="84"/>
        <end position="104"/>
    </location>
</feature>
<feature type="transmembrane region" description="Helical" evidence="2">
    <location>
        <begin position="186"/>
        <end position="206"/>
    </location>
</feature>
<feature type="transmembrane region" description="Helical" evidence="2">
    <location>
        <begin position="218"/>
        <end position="238"/>
    </location>
</feature>
<proteinExistence type="inferred from homology"/>